<sequence>MTQMNFTDKIKVAIIANGKYQSKRLTAKLFAILRNDDRFYLTKKNPDIVITIGGDGMLLSAFHMYEKCLDHVRFVGIHTGHLGFYTDYRDFEVDKLLENLHSDKGEKASYPILKVTATLADGRQLTSRALNEATIRRIEKTMVADVVINKVHFERFRGDGISVSTPTGSTAYNKSLGGAVLHPTIEALQLTEISSLNNRVFRTLGSSIIVPKKDKIEIVPKRLGSYVLSIDNKTYTHRNVAKIEYEIDRKKISFVSTPSHTSFWERVKDAFIGDFDS</sequence>
<accession>Q8DU98</accession>
<evidence type="ECO:0000255" key="1">
    <source>
        <dbReference type="HAMAP-Rule" id="MF_00361"/>
    </source>
</evidence>
<comment type="function">
    <text evidence="1">Involved in the regulation of the intracellular balance of NAD and NADP, and is a key enzyme in the biosynthesis of NADP. Catalyzes specifically the phosphorylation on 2'-hydroxyl of the adenosine moiety of NAD to yield NADP.</text>
</comment>
<comment type="catalytic activity">
    <reaction evidence="1">
        <text>NAD(+) + ATP = ADP + NADP(+) + H(+)</text>
        <dbReference type="Rhea" id="RHEA:18629"/>
        <dbReference type="ChEBI" id="CHEBI:15378"/>
        <dbReference type="ChEBI" id="CHEBI:30616"/>
        <dbReference type="ChEBI" id="CHEBI:57540"/>
        <dbReference type="ChEBI" id="CHEBI:58349"/>
        <dbReference type="ChEBI" id="CHEBI:456216"/>
        <dbReference type="EC" id="2.7.1.23"/>
    </reaction>
</comment>
<comment type="cofactor">
    <cofactor evidence="1">
        <name>a divalent metal cation</name>
        <dbReference type="ChEBI" id="CHEBI:60240"/>
    </cofactor>
</comment>
<comment type="subcellular location">
    <subcellularLocation>
        <location evidence="1">Cytoplasm</location>
    </subcellularLocation>
</comment>
<comment type="similarity">
    <text evidence="1">Belongs to the NAD kinase family.</text>
</comment>
<protein>
    <recommendedName>
        <fullName evidence="1">NAD kinase</fullName>
        <ecNumber evidence="1">2.7.1.23</ecNumber>
    </recommendedName>
    <alternativeName>
        <fullName evidence="1">ATP-dependent NAD kinase</fullName>
    </alternativeName>
</protein>
<reference key="1">
    <citation type="journal article" date="2002" name="Proc. Natl. Acad. Sci. U.S.A.">
        <title>Genome sequence of Streptococcus mutans UA159, a cariogenic dental pathogen.</title>
        <authorList>
            <person name="Ajdic D.J."/>
            <person name="McShan W.M."/>
            <person name="McLaughlin R.E."/>
            <person name="Savic G."/>
            <person name="Chang J."/>
            <person name="Carson M.B."/>
            <person name="Primeaux C."/>
            <person name="Tian R."/>
            <person name="Kenton S."/>
            <person name="Jia H.G."/>
            <person name="Lin S.P."/>
            <person name="Qian Y."/>
            <person name="Li S."/>
            <person name="Zhu H."/>
            <person name="Najar F.Z."/>
            <person name="Lai H."/>
            <person name="White J."/>
            <person name="Roe B.A."/>
            <person name="Ferretti J.J."/>
        </authorList>
    </citation>
    <scope>NUCLEOTIDE SEQUENCE [LARGE SCALE GENOMIC DNA]</scope>
    <source>
        <strain>ATCC 700610 / UA159</strain>
    </source>
</reference>
<dbReference type="EC" id="2.7.1.23" evidence="1"/>
<dbReference type="EMBL" id="AE014133">
    <property type="protein sequence ID" value="AAN58744.1"/>
    <property type="molecule type" value="Genomic_DNA"/>
</dbReference>
<dbReference type="RefSeq" id="NP_721438.1">
    <property type="nucleotide sequence ID" value="NC_004350.2"/>
</dbReference>
<dbReference type="RefSeq" id="WP_002262293.1">
    <property type="nucleotide sequence ID" value="NC_004350.2"/>
</dbReference>
<dbReference type="SMR" id="Q8DU98"/>
<dbReference type="STRING" id="210007.SMU_1045c"/>
<dbReference type="KEGG" id="smu:SMU_1045c"/>
<dbReference type="PATRIC" id="fig|210007.7.peg.935"/>
<dbReference type="eggNOG" id="COG0061">
    <property type="taxonomic scope" value="Bacteria"/>
</dbReference>
<dbReference type="HOGENOM" id="CLU_008831_0_3_9"/>
<dbReference type="OrthoDB" id="9774737at2"/>
<dbReference type="PhylomeDB" id="Q8DU98"/>
<dbReference type="Proteomes" id="UP000002512">
    <property type="component" value="Chromosome"/>
</dbReference>
<dbReference type="GO" id="GO:0005737">
    <property type="term" value="C:cytoplasm"/>
    <property type="evidence" value="ECO:0007669"/>
    <property type="project" value="UniProtKB-SubCell"/>
</dbReference>
<dbReference type="GO" id="GO:0005524">
    <property type="term" value="F:ATP binding"/>
    <property type="evidence" value="ECO:0007669"/>
    <property type="project" value="UniProtKB-KW"/>
</dbReference>
<dbReference type="GO" id="GO:0046872">
    <property type="term" value="F:metal ion binding"/>
    <property type="evidence" value="ECO:0007669"/>
    <property type="project" value="UniProtKB-UniRule"/>
</dbReference>
<dbReference type="GO" id="GO:0051287">
    <property type="term" value="F:NAD binding"/>
    <property type="evidence" value="ECO:0007669"/>
    <property type="project" value="UniProtKB-ARBA"/>
</dbReference>
<dbReference type="GO" id="GO:0003951">
    <property type="term" value="F:NAD+ kinase activity"/>
    <property type="evidence" value="ECO:0007669"/>
    <property type="project" value="UniProtKB-UniRule"/>
</dbReference>
<dbReference type="GO" id="GO:0019674">
    <property type="term" value="P:NAD metabolic process"/>
    <property type="evidence" value="ECO:0007669"/>
    <property type="project" value="InterPro"/>
</dbReference>
<dbReference type="GO" id="GO:0006741">
    <property type="term" value="P:NADP biosynthetic process"/>
    <property type="evidence" value="ECO:0007669"/>
    <property type="project" value="UniProtKB-UniRule"/>
</dbReference>
<dbReference type="Gene3D" id="3.40.50.10330">
    <property type="entry name" value="Probable inorganic polyphosphate/atp-NAD kinase, domain 1"/>
    <property type="match status" value="1"/>
</dbReference>
<dbReference type="Gene3D" id="2.60.200.30">
    <property type="entry name" value="Probable inorganic polyphosphate/atp-NAD kinase, domain 2"/>
    <property type="match status" value="1"/>
</dbReference>
<dbReference type="HAMAP" id="MF_00361">
    <property type="entry name" value="NAD_kinase"/>
    <property type="match status" value="1"/>
</dbReference>
<dbReference type="InterPro" id="IPR017438">
    <property type="entry name" value="ATP-NAD_kinase_N"/>
</dbReference>
<dbReference type="InterPro" id="IPR017437">
    <property type="entry name" value="ATP-NAD_kinase_PpnK-typ_C"/>
</dbReference>
<dbReference type="InterPro" id="IPR016064">
    <property type="entry name" value="NAD/diacylglycerol_kinase_sf"/>
</dbReference>
<dbReference type="InterPro" id="IPR002504">
    <property type="entry name" value="NADK"/>
</dbReference>
<dbReference type="NCBIfam" id="NF003424">
    <property type="entry name" value="PRK04885.1"/>
    <property type="match status" value="1"/>
</dbReference>
<dbReference type="PANTHER" id="PTHR20275">
    <property type="entry name" value="NAD KINASE"/>
    <property type="match status" value="1"/>
</dbReference>
<dbReference type="PANTHER" id="PTHR20275:SF0">
    <property type="entry name" value="NAD KINASE"/>
    <property type="match status" value="1"/>
</dbReference>
<dbReference type="Pfam" id="PF01513">
    <property type="entry name" value="NAD_kinase"/>
    <property type="match status" value="1"/>
</dbReference>
<dbReference type="Pfam" id="PF20143">
    <property type="entry name" value="NAD_kinase_C"/>
    <property type="match status" value="1"/>
</dbReference>
<dbReference type="SUPFAM" id="SSF111331">
    <property type="entry name" value="NAD kinase/diacylglycerol kinase-like"/>
    <property type="match status" value="1"/>
</dbReference>
<feature type="chain" id="PRO_0000229694" description="NAD kinase">
    <location>
        <begin position="1"/>
        <end position="277"/>
    </location>
</feature>
<feature type="active site" description="Proton acceptor" evidence="1">
    <location>
        <position position="55"/>
    </location>
</feature>
<feature type="binding site" evidence="1">
    <location>
        <begin position="55"/>
        <end position="56"/>
    </location>
    <ligand>
        <name>NAD(+)</name>
        <dbReference type="ChEBI" id="CHEBI:57540"/>
    </ligand>
</feature>
<feature type="binding site" evidence="1">
    <location>
        <begin position="131"/>
        <end position="132"/>
    </location>
    <ligand>
        <name>NAD(+)</name>
        <dbReference type="ChEBI" id="CHEBI:57540"/>
    </ligand>
</feature>
<feature type="binding site" evidence="1">
    <location>
        <position position="157"/>
    </location>
    <ligand>
        <name>NAD(+)</name>
        <dbReference type="ChEBI" id="CHEBI:57540"/>
    </ligand>
</feature>
<feature type="binding site" evidence="1">
    <location>
        <position position="159"/>
    </location>
    <ligand>
        <name>NAD(+)</name>
        <dbReference type="ChEBI" id="CHEBI:57540"/>
    </ligand>
</feature>
<feature type="binding site" evidence="1">
    <location>
        <begin position="170"/>
        <end position="175"/>
    </location>
    <ligand>
        <name>NAD(+)</name>
        <dbReference type="ChEBI" id="CHEBI:57540"/>
    </ligand>
</feature>
<proteinExistence type="inferred from homology"/>
<name>NADK_STRMU</name>
<organism>
    <name type="scientific">Streptococcus mutans serotype c (strain ATCC 700610 / UA159)</name>
    <dbReference type="NCBI Taxonomy" id="210007"/>
    <lineage>
        <taxon>Bacteria</taxon>
        <taxon>Bacillati</taxon>
        <taxon>Bacillota</taxon>
        <taxon>Bacilli</taxon>
        <taxon>Lactobacillales</taxon>
        <taxon>Streptococcaceae</taxon>
        <taxon>Streptococcus</taxon>
    </lineage>
</organism>
<keyword id="KW-0067">ATP-binding</keyword>
<keyword id="KW-0963">Cytoplasm</keyword>
<keyword id="KW-0418">Kinase</keyword>
<keyword id="KW-0520">NAD</keyword>
<keyword id="KW-0521">NADP</keyword>
<keyword id="KW-0547">Nucleotide-binding</keyword>
<keyword id="KW-1185">Reference proteome</keyword>
<keyword id="KW-0808">Transferase</keyword>
<gene>
    <name evidence="1" type="primary">nadK</name>
    <name type="ordered locus">SMU_1045c</name>
</gene>